<name>RPOT3_NICSY</name>
<protein>
    <recommendedName>
        <fullName>DNA-directed RNA polymerase 3, chloroplastic</fullName>
        <ecNumber>2.7.7.6</ecNumber>
    </recommendedName>
    <alternativeName>
        <fullName>NsRpoT-C</fullName>
    </alternativeName>
    <alternativeName>
        <fullName>T7 bacteriophage-type single subunit RNA polymerase 3</fullName>
    </alternativeName>
</protein>
<evidence type="ECO:0000250" key="1"/>
<evidence type="ECO:0000255" key="2"/>
<evidence type="ECO:0000255" key="3">
    <source>
        <dbReference type="PROSITE-ProRule" id="PRU10031"/>
    </source>
</evidence>
<evidence type="ECO:0000255" key="4">
    <source>
        <dbReference type="PROSITE-ProRule" id="PRU10032"/>
    </source>
</evidence>
<evidence type="ECO:0000269" key="5">
    <source>
    </source>
</evidence>
<evidence type="ECO:0000269" key="6">
    <source>
    </source>
</evidence>
<evidence type="ECO:0000305" key="7"/>
<accession>P69242</accession>
<accession>Q8L4F8</accession>
<comment type="function">
    <text>DNA-dependent RNA polymerase catalyzes the transcription of DNA into RNA using the four ribonucleoside triphosphates as substrates.</text>
</comment>
<comment type="catalytic activity">
    <reaction evidence="3 4">
        <text>RNA(n) + a ribonucleoside 5'-triphosphate = RNA(n+1) + diphosphate</text>
        <dbReference type="Rhea" id="RHEA:21248"/>
        <dbReference type="Rhea" id="RHEA-COMP:14527"/>
        <dbReference type="Rhea" id="RHEA-COMP:17342"/>
        <dbReference type="ChEBI" id="CHEBI:33019"/>
        <dbReference type="ChEBI" id="CHEBI:61557"/>
        <dbReference type="ChEBI" id="CHEBI:140395"/>
        <dbReference type="EC" id="2.7.7.6"/>
    </reaction>
</comment>
<comment type="subcellular location">
    <subcellularLocation>
        <location evidence="5 6">Plastid</location>
        <location evidence="5 6">Chloroplast</location>
    </subcellularLocation>
</comment>
<comment type="tissue specificity">
    <text evidence="6">The highest levels of expression are detected in the mature leaves.</text>
</comment>
<comment type="similarity">
    <text evidence="7">Belongs to the phage and mitochondrial RNA polymerase family.</text>
</comment>
<dbReference type="EC" id="2.7.7.6"/>
<dbReference type="EMBL" id="AB084950">
    <property type="protein sequence ID" value="BAC22693.1"/>
    <property type="molecule type" value="Genomic_DNA"/>
</dbReference>
<dbReference type="EMBL" id="AB084951">
    <property type="protein sequence ID" value="BAC22694.1"/>
    <property type="molecule type" value="mRNA"/>
</dbReference>
<dbReference type="EMBL" id="AJ302020">
    <property type="protein sequence ID" value="CAC82576.3"/>
    <property type="molecule type" value="mRNA"/>
</dbReference>
<dbReference type="RefSeq" id="NP_001289533.1">
    <property type="nucleotide sequence ID" value="NM_001302604.2"/>
</dbReference>
<dbReference type="SMR" id="P69242"/>
<dbReference type="STRING" id="4096.P69242"/>
<dbReference type="GeneID" id="104216269"/>
<dbReference type="KEGG" id="nsy:104216269"/>
<dbReference type="eggNOG" id="KOG1038">
    <property type="taxonomic scope" value="Eukaryota"/>
</dbReference>
<dbReference type="Proteomes" id="UP000189701">
    <property type="component" value="Unplaced"/>
</dbReference>
<dbReference type="GO" id="GO:0009507">
    <property type="term" value="C:chloroplast"/>
    <property type="evidence" value="ECO:0007669"/>
    <property type="project" value="UniProtKB-SubCell"/>
</dbReference>
<dbReference type="GO" id="GO:0034245">
    <property type="term" value="C:mitochondrial DNA-directed RNA polymerase complex"/>
    <property type="evidence" value="ECO:0007669"/>
    <property type="project" value="TreeGrafter"/>
</dbReference>
<dbReference type="GO" id="GO:0009536">
    <property type="term" value="C:plastid"/>
    <property type="evidence" value="ECO:0000314"/>
    <property type="project" value="UniProtKB"/>
</dbReference>
<dbReference type="GO" id="GO:0003677">
    <property type="term" value="F:DNA binding"/>
    <property type="evidence" value="ECO:0007669"/>
    <property type="project" value="InterPro"/>
</dbReference>
<dbReference type="GO" id="GO:0003899">
    <property type="term" value="F:DNA-directed RNA polymerase activity"/>
    <property type="evidence" value="ECO:0007669"/>
    <property type="project" value="UniProtKB-EC"/>
</dbReference>
<dbReference type="GO" id="GO:0006390">
    <property type="term" value="P:mitochondrial transcription"/>
    <property type="evidence" value="ECO:0007669"/>
    <property type="project" value="TreeGrafter"/>
</dbReference>
<dbReference type="FunFam" id="1.10.1320.10:FF:000001">
    <property type="entry name" value="DNA-directed RNA polymerase"/>
    <property type="match status" value="1"/>
</dbReference>
<dbReference type="FunFam" id="1.10.150.20:FF:000027">
    <property type="entry name" value="DNA-directed RNA polymerase"/>
    <property type="match status" value="1"/>
</dbReference>
<dbReference type="FunFam" id="1.10.287.260:FF:000001">
    <property type="entry name" value="DNA-directed RNA polymerase"/>
    <property type="match status" value="1"/>
</dbReference>
<dbReference type="FunFam" id="1.10.287.280:FF:000001">
    <property type="entry name" value="DNA-directed RNA polymerase"/>
    <property type="match status" value="1"/>
</dbReference>
<dbReference type="Gene3D" id="1.10.287.260">
    <property type="match status" value="1"/>
</dbReference>
<dbReference type="Gene3D" id="1.10.287.280">
    <property type="match status" value="1"/>
</dbReference>
<dbReference type="Gene3D" id="1.10.150.20">
    <property type="entry name" value="5' to 3' exonuclease, C-terminal subdomain"/>
    <property type="match status" value="1"/>
</dbReference>
<dbReference type="Gene3D" id="1.10.1320.10">
    <property type="entry name" value="DNA-directed RNA polymerase, N-terminal domain"/>
    <property type="match status" value="1"/>
</dbReference>
<dbReference type="InterPro" id="IPR024075">
    <property type="entry name" value="DNA-dir_RNA_pol_helix_hairp_sf"/>
</dbReference>
<dbReference type="InterPro" id="IPR046950">
    <property type="entry name" value="DNA-dir_Rpol_C_phage-type"/>
</dbReference>
<dbReference type="InterPro" id="IPR002092">
    <property type="entry name" value="DNA-dir_Rpol_phage-type"/>
</dbReference>
<dbReference type="InterPro" id="IPR043502">
    <property type="entry name" value="DNA/RNA_pol_sf"/>
</dbReference>
<dbReference type="InterPro" id="IPR037159">
    <property type="entry name" value="RNA_POL_N_sf"/>
</dbReference>
<dbReference type="InterPro" id="IPR029262">
    <property type="entry name" value="RPOL_N"/>
</dbReference>
<dbReference type="PANTHER" id="PTHR10102:SF1">
    <property type="entry name" value="DNA-DIRECTED RNA POLYMERASE 3, CHLOROPLASTIC"/>
    <property type="match status" value="1"/>
</dbReference>
<dbReference type="PANTHER" id="PTHR10102">
    <property type="entry name" value="DNA-DIRECTED RNA POLYMERASE, MITOCHONDRIAL"/>
    <property type="match status" value="1"/>
</dbReference>
<dbReference type="Pfam" id="PF00940">
    <property type="entry name" value="RNA_pol"/>
    <property type="match status" value="1"/>
</dbReference>
<dbReference type="Pfam" id="PF14700">
    <property type="entry name" value="RPOL_N"/>
    <property type="match status" value="1"/>
</dbReference>
<dbReference type="SMART" id="SM01311">
    <property type="entry name" value="RPOL_N"/>
    <property type="match status" value="1"/>
</dbReference>
<dbReference type="SUPFAM" id="SSF56672">
    <property type="entry name" value="DNA/RNA polymerases"/>
    <property type="match status" value="1"/>
</dbReference>
<dbReference type="PROSITE" id="PS00900">
    <property type="entry name" value="RNA_POL_PHAGE_1"/>
    <property type="match status" value="1"/>
</dbReference>
<dbReference type="PROSITE" id="PS00489">
    <property type="entry name" value="RNA_POL_PHAGE_2"/>
    <property type="match status" value="1"/>
</dbReference>
<feature type="transit peptide" description="Chloroplast" evidence="2">
    <location>
        <begin position="1"/>
        <end position="72"/>
    </location>
</feature>
<feature type="chain" id="PRO_0000031074" description="DNA-directed RNA polymerase 3, chloroplastic">
    <location>
        <begin position="73"/>
        <end position="977"/>
    </location>
</feature>
<feature type="active site" evidence="1">
    <location>
        <position position="678"/>
    </location>
</feature>
<feature type="active site" evidence="1">
    <location>
        <position position="753"/>
    </location>
</feature>
<feature type="active site" evidence="1">
    <location>
        <position position="910"/>
    </location>
</feature>
<gene>
    <name type="primary">RPOT3</name>
    <name type="synonym">RPOT-C</name>
</gene>
<proteinExistence type="evidence at transcript level"/>
<reference key="1">
    <citation type="journal article" date="2002" name="Biochem. Biophys. Res. Commun.">
        <title>Non-AUG translation initiation of mRNA encoding plastid-targeted phage-type RNA polymerase in Nicotiana sylvestris.</title>
        <authorList>
            <person name="Kobayashi Y."/>
            <person name="Dokiya Y."/>
            <person name="Kumazawa Y."/>
            <person name="Sugita M."/>
        </authorList>
    </citation>
    <scope>NUCLEOTIDE SEQUENCE [GENOMIC DNA / MRNA]</scope>
    <scope>SUBCELLULAR LOCATION</scope>
    <scope>TISSUE SPECIFICITY</scope>
    <source>
        <tissue>Leaf</tissue>
    </source>
</reference>
<reference key="2">
    <citation type="journal article" date="2002" name="Plant J.">
        <title>Six active phage-type RNA polymerase genes in Nicotiana tabacum.</title>
        <authorList>
            <person name="Hedtke B."/>
            <person name="Legen J."/>
            <person name="Weihe A."/>
            <person name="Herrmann R.G."/>
            <person name="Boerner T."/>
        </authorList>
    </citation>
    <scope>NUCLEOTIDE SEQUENCE [MRNA]</scope>
    <scope>SUBCELLULAR LOCATION</scope>
</reference>
<organism>
    <name type="scientific">Nicotiana sylvestris</name>
    <name type="common">Wood tobacco</name>
    <name type="synonym">South American tobacco</name>
    <dbReference type="NCBI Taxonomy" id="4096"/>
    <lineage>
        <taxon>Eukaryota</taxon>
        <taxon>Viridiplantae</taxon>
        <taxon>Streptophyta</taxon>
        <taxon>Embryophyta</taxon>
        <taxon>Tracheophyta</taxon>
        <taxon>Spermatophyta</taxon>
        <taxon>Magnoliopsida</taxon>
        <taxon>eudicotyledons</taxon>
        <taxon>Gunneridae</taxon>
        <taxon>Pentapetalae</taxon>
        <taxon>asterids</taxon>
        <taxon>lamiids</taxon>
        <taxon>Solanales</taxon>
        <taxon>Solanaceae</taxon>
        <taxon>Nicotianoideae</taxon>
        <taxon>Nicotianeae</taxon>
        <taxon>Nicotiana</taxon>
    </lineage>
</organism>
<keyword id="KW-0150">Chloroplast</keyword>
<keyword id="KW-0240">DNA-directed RNA polymerase</keyword>
<keyword id="KW-0548">Nucleotidyltransferase</keyword>
<keyword id="KW-0934">Plastid</keyword>
<keyword id="KW-1185">Reference proteome</keyword>
<keyword id="KW-0804">Transcription</keyword>
<keyword id="KW-0808">Transferase</keyword>
<keyword id="KW-0809">Transit peptide</keyword>
<sequence length="977" mass="111424">MASTASYSPSPTSQWRTQKLPKRFNFYVIHNQEFGKLSQSSSLPTSSFPKTLKLPVIQMPINNNIQSQTTVCVSTDENLEELVNLQKIANGVLTKESNKRVFIQDPPWVSSLFMNSLFVRAKQVQGVRREFREIERRRRYAMLRRRQIKAETEAWEQMVEEYRELEREMCEKKLAPNLPYVKKLLLGWFEPLRQAIEKEQNAETTVKHRAAFAPHIDSLPADKMAVIVMHKLMGLLMMGGKEERCVQVVQAAVQIGMAVENEVRIHNFLEKTKKLQKHMTGAQSQEDMSRETMILRKRVKSLIKRNRVVEVRKLMKSEEPESWGRDTQAKLGCRLLELLTETAYVQPPVDQSADTPPDIRPAFRHVFRIATRDPGKSIVKKYGVIECDPLVVAGVDRTVKQMMIPYVPMLVPPKKWRGYDKGGYLFLPSYLMRTHGSRRQQDAVRSVPTKQMQQVYEALDTLGSTKWRVNKRILSVVESIWAGGGNIAGLVDRKDVPIPELHSDDIMEVKKWKWRVRKSKKINQELHSQRCDTELKLSVARKLKDEEGFYYPHNLDFRGRAYPMHPHLNHLSSDLCRGILEFAEGRPLGKSGLRWLKIHLASLYAGGIEKLCYDARLAFVENHIDDILDSANNPLNGNRWWLNAEDPFQCLAACINLSEALKSSSPHTVFSHLPIHQDGSCNGLQHYAALGRDSMEAAAVNLVAGDKPADVYTEIALRVDHIIRGDSIKDPATDPNALLAKLLIDQVDRKLVKQTVMTSVYGVTYVGAREQIKRRLEEKGLIDDDRLLFTASCYAAKVTLAALGELFQAARGTMTWLGDCAKVIASENQPVRWTTPLGLPVVQPYFKTQRHVIRTSLQVLALQREGDTVEVRKQRTAFPPNFVHSLDGSHMMMTAVACRDAGLQFAGVHDSFWTHACDVDQMNRILREKFVELYSMPILEDLLESFQNSYPALTFPPLPKRGDFDLVEVLESPYFFN</sequence>